<accession>B2GDW1</accession>
<gene>
    <name evidence="1" type="primary">rpmC</name>
    <name type="ordered locus">LAF_1507</name>
</gene>
<keyword id="KW-1185">Reference proteome</keyword>
<keyword id="KW-0687">Ribonucleoprotein</keyword>
<keyword id="KW-0689">Ribosomal protein</keyword>
<evidence type="ECO:0000255" key="1">
    <source>
        <dbReference type="HAMAP-Rule" id="MF_00374"/>
    </source>
</evidence>
<evidence type="ECO:0000305" key="2"/>
<proteinExistence type="inferred from homology"/>
<sequence>MKTKDYVQELNGLTTEQLLNREKELKEQLFNLRFQLATGQLENTASLKTVRKNIARVKTVLRQQELNN</sequence>
<feature type="chain" id="PRO_1000121782" description="Large ribosomal subunit protein uL29">
    <location>
        <begin position="1"/>
        <end position="68"/>
    </location>
</feature>
<comment type="similarity">
    <text evidence="1">Belongs to the universal ribosomal protein uL29 family.</text>
</comment>
<protein>
    <recommendedName>
        <fullName evidence="1">Large ribosomal subunit protein uL29</fullName>
    </recommendedName>
    <alternativeName>
        <fullName evidence="2">50S ribosomal protein L29</fullName>
    </alternativeName>
</protein>
<name>RL29_LIMF3</name>
<organism>
    <name type="scientific">Limosilactobacillus fermentum (strain NBRC 3956 / LMG 18251)</name>
    <name type="common">Lactobacillus fermentum</name>
    <dbReference type="NCBI Taxonomy" id="334390"/>
    <lineage>
        <taxon>Bacteria</taxon>
        <taxon>Bacillati</taxon>
        <taxon>Bacillota</taxon>
        <taxon>Bacilli</taxon>
        <taxon>Lactobacillales</taxon>
        <taxon>Lactobacillaceae</taxon>
        <taxon>Limosilactobacillus</taxon>
    </lineage>
</organism>
<dbReference type="EMBL" id="AP008937">
    <property type="protein sequence ID" value="BAG27843.1"/>
    <property type="molecule type" value="Genomic_DNA"/>
</dbReference>
<dbReference type="RefSeq" id="WP_003681586.1">
    <property type="nucleotide sequence ID" value="NC_010610.1"/>
</dbReference>
<dbReference type="SMR" id="B2GDW1"/>
<dbReference type="GeneID" id="83716116"/>
<dbReference type="KEGG" id="lfe:LAF_1507"/>
<dbReference type="eggNOG" id="COG0255">
    <property type="taxonomic scope" value="Bacteria"/>
</dbReference>
<dbReference type="HOGENOM" id="CLU_158491_5_2_9"/>
<dbReference type="Proteomes" id="UP000001697">
    <property type="component" value="Chromosome"/>
</dbReference>
<dbReference type="GO" id="GO:0022625">
    <property type="term" value="C:cytosolic large ribosomal subunit"/>
    <property type="evidence" value="ECO:0007669"/>
    <property type="project" value="TreeGrafter"/>
</dbReference>
<dbReference type="GO" id="GO:0003735">
    <property type="term" value="F:structural constituent of ribosome"/>
    <property type="evidence" value="ECO:0007669"/>
    <property type="project" value="InterPro"/>
</dbReference>
<dbReference type="GO" id="GO:0006412">
    <property type="term" value="P:translation"/>
    <property type="evidence" value="ECO:0007669"/>
    <property type="project" value="UniProtKB-UniRule"/>
</dbReference>
<dbReference type="CDD" id="cd00427">
    <property type="entry name" value="Ribosomal_L29_HIP"/>
    <property type="match status" value="1"/>
</dbReference>
<dbReference type="FunFam" id="1.10.287.310:FF:000001">
    <property type="entry name" value="50S ribosomal protein L29"/>
    <property type="match status" value="1"/>
</dbReference>
<dbReference type="Gene3D" id="1.10.287.310">
    <property type="match status" value="1"/>
</dbReference>
<dbReference type="HAMAP" id="MF_00374">
    <property type="entry name" value="Ribosomal_uL29"/>
    <property type="match status" value="1"/>
</dbReference>
<dbReference type="InterPro" id="IPR050063">
    <property type="entry name" value="Ribosomal_protein_uL29"/>
</dbReference>
<dbReference type="InterPro" id="IPR001854">
    <property type="entry name" value="Ribosomal_uL29"/>
</dbReference>
<dbReference type="InterPro" id="IPR018254">
    <property type="entry name" value="Ribosomal_uL29_CS"/>
</dbReference>
<dbReference type="InterPro" id="IPR036049">
    <property type="entry name" value="Ribosomal_uL29_sf"/>
</dbReference>
<dbReference type="NCBIfam" id="TIGR00012">
    <property type="entry name" value="L29"/>
    <property type="match status" value="1"/>
</dbReference>
<dbReference type="PANTHER" id="PTHR10916">
    <property type="entry name" value="60S RIBOSOMAL PROTEIN L35/50S RIBOSOMAL PROTEIN L29"/>
    <property type="match status" value="1"/>
</dbReference>
<dbReference type="PANTHER" id="PTHR10916:SF0">
    <property type="entry name" value="LARGE RIBOSOMAL SUBUNIT PROTEIN UL29C"/>
    <property type="match status" value="1"/>
</dbReference>
<dbReference type="Pfam" id="PF00831">
    <property type="entry name" value="Ribosomal_L29"/>
    <property type="match status" value="1"/>
</dbReference>
<dbReference type="SUPFAM" id="SSF46561">
    <property type="entry name" value="Ribosomal protein L29 (L29p)"/>
    <property type="match status" value="1"/>
</dbReference>
<dbReference type="PROSITE" id="PS00579">
    <property type="entry name" value="RIBOSOMAL_L29"/>
    <property type="match status" value="1"/>
</dbReference>
<reference key="1">
    <citation type="journal article" date="2008" name="DNA Res.">
        <title>Comparative genome analysis of Lactobacillus reuteri and Lactobacillus fermentum reveal a genomic island for reuterin and cobalamin production.</title>
        <authorList>
            <person name="Morita H."/>
            <person name="Toh H."/>
            <person name="Fukuda S."/>
            <person name="Horikawa H."/>
            <person name="Oshima K."/>
            <person name="Suzuki T."/>
            <person name="Murakami M."/>
            <person name="Hisamatsu S."/>
            <person name="Kato Y."/>
            <person name="Takizawa T."/>
            <person name="Fukuoka H."/>
            <person name="Yoshimura T."/>
            <person name="Itoh K."/>
            <person name="O'Sullivan D.J."/>
            <person name="McKay L.L."/>
            <person name="Ohno H."/>
            <person name="Kikuchi J."/>
            <person name="Masaoka T."/>
            <person name="Hattori M."/>
        </authorList>
    </citation>
    <scope>NUCLEOTIDE SEQUENCE [LARGE SCALE GENOMIC DNA]</scope>
    <source>
        <strain>NBRC 3956 / LMG 18251</strain>
    </source>
</reference>